<proteinExistence type="inferred from homology"/>
<dbReference type="EC" id="6.3.5.7" evidence="1"/>
<dbReference type="EMBL" id="CP001071">
    <property type="protein sequence ID" value="ACD05600.1"/>
    <property type="molecule type" value="Genomic_DNA"/>
</dbReference>
<dbReference type="RefSeq" id="WP_012420814.1">
    <property type="nucleotide sequence ID" value="NC_010655.1"/>
</dbReference>
<dbReference type="SMR" id="B2UMP4"/>
<dbReference type="STRING" id="349741.Amuc_1782"/>
<dbReference type="PaxDb" id="349741-Amuc_1782"/>
<dbReference type="KEGG" id="amu:Amuc_1782"/>
<dbReference type="eggNOG" id="COG0154">
    <property type="taxonomic scope" value="Bacteria"/>
</dbReference>
<dbReference type="HOGENOM" id="CLU_009600_0_3_0"/>
<dbReference type="OrthoDB" id="9811471at2"/>
<dbReference type="BioCyc" id="AMUC349741:G1GBX-1898-MONOMER"/>
<dbReference type="Proteomes" id="UP000001031">
    <property type="component" value="Chromosome"/>
</dbReference>
<dbReference type="GO" id="GO:0030956">
    <property type="term" value="C:glutamyl-tRNA(Gln) amidotransferase complex"/>
    <property type="evidence" value="ECO:0007669"/>
    <property type="project" value="InterPro"/>
</dbReference>
<dbReference type="GO" id="GO:0005524">
    <property type="term" value="F:ATP binding"/>
    <property type="evidence" value="ECO:0007669"/>
    <property type="project" value="UniProtKB-KW"/>
</dbReference>
<dbReference type="GO" id="GO:0050567">
    <property type="term" value="F:glutaminyl-tRNA synthase (glutamine-hydrolyzing) activity"/>
    <property type="evidence" value="ECO:0007669"/>
    <property type="project" value="UniProtKB-UniRule"/>
</dbReference>
<dbReference type="GO" id="GO:0006412">
    <property type="term" value="P:translation"/>
    <property type="evidence" value="ECO:0007669"/>
    <property type="project" value="UniProtKB-UniRule"/>
</dbReference>
<dbReference type="Gene3D" id="3.90.1300.10">
    <property type="entry name" value="Amidase signature (AS) domain"/>
    <property type="match status" value="1"/>
</dbReference>
<dbReference type="HAMAP" id="MF_00120">
    <property type="entry name" value="GatA"/>
    <property type="match status" value="1"/>
</dbReference>
<dbReference type="InterPro" id="IPR000120">
    <property type="entry name" value="Amidase"/>
</dbReference>
<dbReference type="InterPro" id="IPR020556">
    <property type="entry name" value="Amidase_CS"/>
</dbReference>
<dbReference type="InterPro" id="IPR023631">
    <property type="entry name" value="Amidase_dom"/>
</dbReference>
<dbReference type="InterPro" id="IPR036928">
    <property type="entry name" value="AS_sf"/>
</dbReference>
<dbReference type="InterPro" id="IPR004412">
    <property type="entry name" value="GatA"/>
</dbReference>
<dbReference type="NCBIfam" id="TIGR00132">
    <property type="entry name" value="gatA"/>
    <property type="match status" value="1"/>
</dbReference>
<dbReference type="PANTHER" id="PTHR11895:SF151">
    <property type="entry name" value="GLUTAMYL-TRNA(GLN) AMIDOTRANSFERASE SUBUNIT A"/>
    <property type="match status" value="1"/>
</dbReference>
<dbReference type="PANTHER" id="PTHR11895">
    <property type="entry name" value="TRANSAMIDASE"/>
    <property type="match status" value="1"/>
</dbReference>
<dbReference type="Pfam" id="PF01425">
    <property type="entry name" value="Amidase"/>
    <property type="match status" value="1"/>
</dbReference>
<dbReference type="SUPFAM" id="SSF75304">
    <property type="entry name" value="Amidase signature (AS) enzymes"/>
    <property type="match status" value="1"/>
</dbReference>
<dbReference type="PROSITE" id="PS00571">
    <property type="entry name" value="AMIDASES"/>
    <property type="match status" value="1"/>
</dbReference>
<organism>
    <name type="scientific">Akkermansia muciniphila (strain ATCC BAA-835 / DSM 22959 / JCM 33894 / BCRC 81048 / CCUG 64013 / CIP 107961 / Muc)</name>
    <dbReference type="NCBI Taxonomy" id="349741"/>
    <lineage>
        <taxon>Bacteria</taxon>
        <taxon>Pseudomonadati</taxon>
        <taxon>Verrucomicrobiota</taxon>
        <taxon>Verrucomicrobiia</taxon>
        <taxon>Verrucomicrobiales</taxon>
        <taxon>Akkermansiaceae</taxon>
        <taxon>Akkermansia</taxon>
    </lineage>
</organism>
<sequence>MSKIQGTLAQWRDRLRRKELSPAELVNLTADAIEADRTTNAYISFDREAALHAAAGADISSPLAGIPIAVKDNINVLGQPTRCASRLLSPYVAPYDATSIRLLKEAGGIPLGRTNMDEFAMGASGENSAYGITRNPEAPDRIPGGSSSGSAAAVASATAIAALGSDTGGSIRQPAGHCGIVGLKPTYGRVSRYGLVAFASSLDQIGPMTRTVEDAAILLQAISGHDRKDSTSANCPVPDFEAALGRDVKGLKVGIPSEYFTSGNHPGISEAVQNTVKQLESLGAELVEVNLPHADAVVAAYYIIACAEASSNLSRFDGVRYGKRAEDAAGLVELFSRTREEGFGPEVKRRIILGTYVLSSGYYDAYYSRAQKVRSLVARDFAEAFSRVDIIVGPTSPAPAPKIGDSALDHLQTYLADIYTIPANLAGLPAMSIPCGTVRESGMELPVGFQMMAPHFREDLLLKTGFALGK</sequence>
<feature type="chain" id="PRO_1000095104" description="Glutamyl-tRNA(Gln) amidotransferase subunit A">
    <location>
        <begin position="1"/>
        <end position="470"/>
    </location>
</feature>
<feature type="active site" description="Charge relay system" evidence="1">
    <location>
        <position position="71"/>
    </location>
</feature>
<feature type="active site" description="Charge relay system" evidence="1">
    <location>
        <position position="146"/>
    </location>
</feature>
<feature type="active site" description="Acyl-ester intermediate" evidence="1">
    <location>
        <position position="170"/>
    </location>
</feature>
<accession>B2UMP4</accession>
<gene>
    <name evidence="1" type="primary">gatA</name>
    <name type="ordered locus">Amuc_1782</name>
</gene>
<name>GATA_AKKM8</name>
<reference key="1">
    <citation type="journal article" date="2011" name="PLoS ONE">
        <title>The genome of Akkermansia muciniphila, a dedicated intestinal mucin degrader, and its use in exploring intestinal metagenomes.</title>
        <authorList>
            <person name="van Passel M.W."/>
            <person name="Kant R."/>
            <person name="Zoetendal E.G."/>
            <person name="Plugge C.M."/>
            <person name="Derrien M."/>
            <person name="Malfatti S.A."/>
            <person name="Chain P.S."/>
            <person name="Woyke T."/>
            <person name="Palva A."/>
            <person name="de Vos W.M."/>
            <person name="Smidt H."/>
        </authorList>
    </citation>
    <scope>NUCLEOTIDE SEQUENCE [LARGE SCALE GENOMIC DNA]</scope>
    <source>
        <strain>ATCC BAA-835 / DSM 22959 / JCM 33894 / BCRC 81048 / CCUG 64013 / CIP 107961 / Muc</strain>
    </source>
</reference>
<keyword id="KW-0067">ATP-binding</keyword>
<keyword id="KW-0436">Ligase</keyword>
<keyword id="KW-0547">Nucleotide-binding</keyword>
<keyword id="KW-0648">Protein biosynthesis</keyword>
<keyword id="KW-1185">Reference proteome</keyword>
<comment type="function">
    <text evidence="1">Allows the formation of correctly charged Gln-tRNA(Gln) through the transamidation of misacylated Glu-tRNA(Gln) in organisms which lack glutaminyl-tRNA synthetase. The reaction takes place in the presence of glutamine and ATP through an activated gamma-phospho-Glu-tRNA(Gln).</text>
</comment>
<comment type="catalytic activity">
    <reaction evidence="1">
        <text>L-glutamyl-tRNA(Gln) + L-glutamine + ATP + H2O = L-glutaminyl-tRNA(Gln) + L-glutamate + ADP + phosphate + H(+)</text>
        <dbReference type="Rhea" id="RHEA:17521"/>
        <dbReference type="Rhea" id="RHEA-COMP:9681"/>
        <dbReference type="Rhea" id="RHEA-COMP:9684"/>
        <dbReference type="ChEBI" id="CHEBI:15377"/>
        <dbReference type="ChEBI" id="CHEBI:15378"/>
        <dbReference type="ChEBI" id="CHEBI:29985"/>
        <dbReference type="ChEBI" id="CHEBI:30616"/>
        <dbReference type="ChEBI" id="CHEBI:43474"/>
        <dbReference type="ChEBI" id="CHEBI:58359"/>
        <dbReference type="ChEBI" id="CHEBI:78520"/>
        <dbReference type="ChEBI" id="CHEBI:78521"/>
        <dbReference type="ChEBI" id="CHEBI:456216"/>
        <dbReference type="EC" id="6.3.5.7"/>
    </reaction>
</comment>
<comment type="subunit">
    <text evidence="1">Heterotrimer of A, B and C subunits.</text>
</comment>
<comment type="similarity">
    <text evidence="1">Belongs to the amidase family. GatA subfamily.</text>
</comment>
<evidence type="ECO:0000255" key="1">
    <source>
        <dbReference type="HAMAP-Rule" id="MF_00120"/>
    </source>
</evidence>
<protein>
    <recommendedName>
        <fullName evidence="1">Glutamyl-tRNA(Gln) amidotransferase subunit A</fullName>
        <shortName evidence="1">Glu-ADT subunit A</shortName>
        <ecNumber evidence="1">6.3.5.7</ecNumber>
    </recommendedName>
</protein>